<feature type="chain" id="PRO_0000076767" description="3-isopropylmalate dehydratase large subunit">
    <location>
        <begin position="1"/>
        <end position="469"/>
    </location>
</feature>
<feature type="binding site" evidence="1">
    <location>
        <position position="349"/>
    </location>
    <ligand>
        <name>[4Fe-4S] cluster</name>
        <dbReference type="ChEBI" id="CHEBI:49883"/>
    </ligand>
</feature>
<feature type="binding site" evidence="1">
    <location>
        <position position="410"/>
    </location>
    <ligand>
        <name>[4Fe-4S] cluster</name>
        <dbReference type="ChEBI" id="CHEBI:49883"/>
    </ligand>
</feature>
<feature type="binding site" evidence="1">
    <location>
        <position position="413"/>
    </location>
    <ligand>
        <name>[4Fe-4S] cluster</name>
        <dbReference type="ChEBI" id="CHEBI:49883"/>
    </ligand>
</feature>
<name>LEUC_NEIG1</name>
<comment type="function">
    <text evidence="1">Catalyzes the isomerization between 2-isopropylmalate and 3-isopropylmalate, via the formation of 2-isopropylmaleate.</text>
</comment>
<comment type="catalytic activity">
    <reaction evidence="1">
        <text>(2R,3S)-3-isopropylmalate = (2S)-2-isopropylmalate</text>
        <dbReference type="Rhea" id="RHEA:32287"/>
        <dbReference type="ChEBI" id="CHEBI:1178"/>
        <dbReference type="ChEBI" id="CHEBI:35121"/>
        <dbReference type="EC" id="4.2.1.33"/>
    </reaction>
</comment>
<comment type="cofactor">
    <cofactor evidence="1">
        <name>[4Fe-4S] cluster</name>
        <dbReference type="ChEBI" id="CHEBI:49883"/>
    </cofactor>
    <text evidence="1">Binds 1 [4Fe-4S] cluster per subunit.</text>
</comment>
<comment type="pathway">
    <text evidence="1">Amino-acid biosynthesis; L-leucine biosynthesis; L-leucine from 3-methyl-2-oxobutanoate: step 2/4.</text>
</comment>
<comment type="subunit">
    <text evidence="1">Heterodimer of LeuC and LeuD.</text>
</comment>
<comment type="similarity">
    <text evidence="1">Belongs to the aconitase/IPM isomerase family. LeuC type 1 subfamily.</text>
</comment>
<keyword id="KW-0004">4Fe-4S</keyword>
<keyword id="KW-0028">Amino-acid biosynthesis</keyword>
<keyword id="KW-0100">Branched-chain amino acid biosynthesis</keyword>
<keyword id="KW-0408">Iron</keyword>
<keyword id="KW-0411">Iron-sulfur</keyword>
<keyword id="KW-0432">Leucine biosynthesis</keyword>
<keyword id="KW-0456">Lyase</keyword>
<keyword id="KW-0479">Metal-binding</keyword>
<keyword id="KW-1185">Reference proteome</keyword>
<reference key="1">
    <citation type="submission" date="2003-03" db="EMBL/GenBank/DDBJ databases">
        <title>The complete genome sequence of Neisseria gonorrhoeae.</title>
        <authorList>
            <person name="Lewis L.A."/>
            <person name="Gillaspy A.F."/>
            <person name="McLaughlin R.E."/>
            <person name="Gipson M."/>
            <person name="Ducey T.F."/>
            <person name="Ownbey T."/>
            <person name="Hartman K."/>
            <person name="Nydick C."/>
            <person name="Carson M.B."/>
            <person name="Vaughn J."/>
            <person name="Thomson C."/>
            <person name="Song L."/>
            <person name="Lin S."/>
            <person name="Yuan X."/>
            <person name="Najar F."/>
            <person name="Zhan M."/>
            <person name="Ren Q."/>
            <person name="Zhu H."/>
            <person name="Qi S."/>
            <person name="Kenton S.M."/>
            <person name="Lai H."/>
            <person name="White J.D."/>
            <person name="Clifton S."/>
            <person name="Roe B.A."/>
            <person name="Dyer D.W."/>
        </authorList>
    </citation>
    <scope>NUCLEOTIDE SEQUENCE [LARGE SCALE GENOMIC DNA]</scope>
    <source>
        <strain>ATCC 700825 / FA 1090</strain>
    </source>
</reference>
<sequence>MTAQTLYDKLWNSHVVREEGDGTVLLYIDRHLVHEVTSPQAFEGLKMAGRKLWRIDSVVSTADHNTPTGDWDKGIQDPISKLQVDTLDQNIKEFGALAYFPFMDKGQGIVHVMGPEQGATLPGMTVVCGDSHTSTHGAFGALAHGIGTSEVEHTMATQCITAKKSKSMLIAADGKLKAGVTAKDVALYIIGQIGTAGGTGYAVEFGGEAIRSLSMEGRMTLCNMAIEAGARSGMVAVDQTTIDYVKGKPFAPEGEAWDKAVEYWRTLVSDEGAVFDKEYRFNAEDIEPQVTWGTSPEMVLNIGGKVPNPAEETDPVKRSGIERALEYMGLKAGTPLNEIPVDIVFIGSCTNSRIEDLREAAAIAKGHKKAGNVQRVLIVPGSGLVKEQAEKEGLDKIFIEAGFEWREPGCSMCLAMNADRLAPRQRCASTSNRNFEGRQGNGGRTHLVSPAMAAAAAVTGHFTDIRTMA</sequence>
<protein>
    <recommendedName>
        <fullName evidence="1">3-isopropylmalate dehydratase large subunit</fullName>
        <ecNumber evidence="1">4.2.1.33</ecNumber>
    </recommendedName>
    <alternativeName>
        <fullName evidence="1">Alpha-IPM isomerase</fullName>
        <shortName evidence="1">IPMI</shortName>
    </alternativeName>
    <alternativeName>
        <fullName evidence="1">Isopropylmalate isomerase</fullName>
    </alternativeName>
</protein>
<organism>
    <name type="scientific">Neisseria gonorrhoeae (strain ATCC 700825 / FA 1090)</name>
    <dbReference type="NCBI Taxonomy" id="242231"/>
    <lineage>
        <taxon>Bacteria</taxon>
        <taxon>Pseudomonadati</taxon>
        <taxon>Pseudomonadota</taxon>
        <taxon>Betaproteobacteria</taxon>
        <taxon>Neisseriales</taxon>
        <taxon>Neisseriaceae</taxon>
        <taxon>Neisseria</taxon>
    </lineage>
</organism>
<proteinExistence type="inferred from homology"/>
<dbReference type="EC" id="4.2.1.33" evidence="1"/>
<dbReference type="EMBL" id="AE004969">
    <property type="protein sequence ID" value="AAW89406.1"/>
    <property type="molecule type" value="Genomic_DNA"/>
</dbReference>
<dbReference type="RefSeq" id="WP_010951104.1">
    <property type="nucleotide sequence ID" value="NC_002946.2"/>
</dbReference>
<dbReference type="RefSeq" id="YP_207818.1">
    <property type="nucleotide sequence ID" value="NC_002946.2"/>
</dbReference>
<dbReference type="SMR" id="Q5F8T1"/>
<dbReference type="STRING" id="242231.NGO_0679"/>
<dbReference type="KEGG" id="ngo:NGO_0679"/>
<dbReference type="PATRIC" id="fig|242231.10.peg.800"/>
<dbReference type="HOGENOM" id="CLU_006714_3_4_4"/>
<dbReference type="UniPathway" id="UPA00048">
    <property type="reaction ID" value="UER00071"/>
</dbReference>
<dbReference type="Proteomes" id="UP000000535">
    <property type="component" value="Chromosome"/>
</dbReference>
<dbReference type="GO" id="GO:0003861">
    <property type="term" value="F:3-isopropylmalate dehydratase activity"/>
    <property type="evidence" value="ECO:0007669"/>
    <property type="project" value="UniProtKB-UniRule"/>
</dbReference>
<dbReference type="GO" id="GO:0051539">
    <property type="term" value="F:4 iron, 4 sulfur cluster binding"/>
    <property type="evidence" value="ECO:0007669"/>
    <property type="project" value="UniProtKB-KW"/>
</dbReference>
<dbReference type="GO" id="GO:0046872">
    <property type="term" value="F:metal ion binding"/>
    <property type="evidence" value="ECO:0007669"/>
    <property type="project" value="UniProtKB-KW"/>
</dbReference>
<dbReference type="GO" id="GO:0009098">
    <property type="term" value="P:L-leucine biosynthetic process"/>
    <property type="evidence" value="ECO:0007669"/>
    <property type="project" value="UniProtKB-UniRule"/>
</dbReference>
<dbReference type="CDD" id="cd01583">
    <property type="entry name" value="IPMI"/>
    <property type="match status" value="1"/>
</dbReference>
<dbReference type="FunFam" id="3.30.499.10:FF:000007">
    <property type="entry name" value="3-isopropylmalate dehydratase large subunit"/>
    <property type="match status" value="1"/>
</dbReference>
<dbReference type="Gene3D" id="3.30.499.10">
    <property type="entry name" value="Aconitase, domain 3"/>
    <property type="match status" value="2"/>
</dbReference>
<dbReference type="HAMAP" id="MF_01026">
    <property type="entry name" value="LeuC_type1"/>
    <property type="match status" value="1"/>
</dbReference>
<dbReference type="InterPro" id="IPR004430">
    <property type="entry name" value="3-IsopropMal_deHydase_lsu"/>
</dbReference>
<dbReference type="InterPro" id="IPR015931">
    <property type="entry name" value="Acnase/IPM_dHydase_lsu_aba_1/3"/>
</dbReference>
<dbReference type="InterPro" id="IPR001030">
    <property type="entry name" value="Acoase/IPM_deHydtase_lsu_aba"/>
</dbReference>
<dbReference type="InterPro" id="IPR018136">
    <property type="entry name" value="Aconitase_4Fe-4S_BS"/>
</dbReference>
<dbReference type="InterPro" id="IPR036008">
    <property type="entry name" value="Aconitase_4Fe-4S_dom"/>
</dbReference>
<dbReference type="InterPro" id="IPR050067">
    <property type="entry name" value="IPM_dehydratase_rel_enz"/>
</dbReference>
<dbReference type="InterPro" id="IPR033941">
    <property type="entry name" value="IPMI_cat"/>
</dbReference>
<dbReference type="NCBIfam" id="TIGR00170">
    <property type="entry name" value="leuC"/>
    <property type="match status" value="1"/>
</dbReference>
<dbReference type="NCBIfam" id="NF004016">
    <property type="entry name" value="PRK05478.1"/>
    <property type="match status" value="1"/>
</dbReference>
<dbReference type="NCBIfam" id="NF009116">
    <property type="entry name" value="PRK12466.1"/>
    <property type="match status" value="1"/>
</dbReference>
<dbReference type="PANTHER" id="PTHR43822:SF9">
    <property type="entry name" value="3-ISOPROPYLMALATE DEHYDRATASE"/>
    <property type="match status" value="1"/>
</dbReference>
<dbReference type="PANTHER" id="PTHR43822">
    <property type="entry name" value="HOMOACONITASE, MITOCHONDRIAL-RELATED"/>
    <property type="match status" value="1"/>
</dbReference>
<dbReference type="Pfam" id="PF00330">
    <property type="entry name" value="Aconitase"/>
    <property type="match status" value="1"/>
</dbReference>
<dbReference type="PRINTS" id="PR00415">
    <property type="entry name" value="ACONITASE"/>
</dbReference>
<dbReference type="SUPFAM" id="SSF53732">
    <property type="entry name" value="Aconitase iron-sulfur domain"/>
    <property type="match status" value="1"/>
</dbReference>
<dbReference type="PROSITE" id="PS00450">
    <property type="entry name" value="ACONITASE_1"/>
    <property type="match status" value="1"/>
</dbReference>
<dbReference type="PROSITE" id="PS01244">
    <property type="entry name" value="ACONITASE_2"/>
    <property type="match status" value="1"/>
</dbReference>
<gene>
    <name evidence="1" type="primary">leuC</name>
    <name type="ordered locus">NGO_0679</name>
</gene>
<accession>Q5F8T1</accession>
<evidence type="ECO:0000255" key="1">
    <source>
        <dbReference type="HAMAP-Rule" id="MF_01026"/>
    </source>
</evidence>